<dbReference type="EC" id="2.7.1.23" evidence="1"/>
<dbReference type="EMBL" id="CP001661">
    <property type="protein sequence ID" value="ACT17826.1"/>
    <property type="molecule type" value="Genomic_DNA"/>
</dbReference>
<dbReference type="SMR" id="C6E6I5"/>
<dbReference type="STRING" id="443144.GM21_1772"/>
<dbReference type="KEGG" id="gem:GM21_1772"/>
<dbReference type="eggNOG" id="COG0061">
    <property type="taxonomic scope" value="Bacteria"/>
</dbReference>
<dbReference type="HOGENOM" id="CLU_008831_0_1_7"/>
<dbReference type="OrthoDB" id="9774737at2"/>
<dbReference type="GO" id="GO:0005737">
    <property type="term" value="C:cytoplasm"/>
    <property type="evidence" value="ECO:0007669"/>
    <property type="project" value="UniProtKB-SubCell"/>
</dbReference>
<dbReference type="GO" id="GO:0005524">
    <property type="term" value="F:ATP binding"/>
    <property type="evidence" value="ECO:0007669"/>
    <property type="project" value="UniProtKB-KW"/>
</dbReference>
<dbReference type="GO" id="GO:0046872">
    <property type="term" value="F:metal ion binding"/>
    <property type="evidence" value="ECO:0007669"/>
    <property type="project" value="UniProtKB-UniRule"/>
</dbReference>
<dbReference type="GO" id="GO:0051287">
    <property type="term" value="F:NAD binding"/>
    <property type="evidence" value="ECO:0007669"/>
    <property type="project" value="UniProtKB-ARBA"/>
</dbReference>
<dbReference type="GO" id="GO:0003951">
    <property type="term" value="F:NAD+ kinase activity"/>
    <property type="evidence" value="ECO:0007669"/>
    <property type="project" value="UniProtKB-UniRule"/>
</dbReference>
<dbReference type="GO" id="GO:0019674">
    <property type="term" value="P:NAD metabolic process"/>
    <property type="evidence" value="ECO:0007669"/>
    <property type="project" value="InterPro"/>
</dbReference>
<dbReference type="GO" id="GO:0006741">
    <property type="term" value="P:NADP biosynthetic process"/>
    <property type="evidence" value="ECO:0007669"/>
    <property type="project" value="UniProtKB-UniRule"/>
</dbReference>
<dbReference type="FunFam" id="2.60.200.30:FF:000009">
    <property type="entry name" value="Poly(P)/ATP NAD kinase"/>
    <property type="match status" value="1"/>
</dbReference>
<dbReference type="Gene3D" id="3.40.50.10330">
    <property type="entry name" value="Probable inorganic polyphosphate/atp-NAD kinase, domain 1"/>
    <property type="match status" value="1"/>
</dbReference>
<dbReference type="Gene3D" id="2.60.200.30">
    <property type="entry name" value="Probable inorganic polyphosphate/atp-NAD kinase, domain 2"/>
    <property type="match status" value="1"/>
</dbReference>
<dbReference type="HAMAP" id="MF_00361">
    <property type="entry name" value="NAD_kinase"/>
    <property type="match status" value="1"/>
</dbReference>
<dbReference type="InterPro" id="IPR017438">
    <property type="entry name" value="ATP-NAD_kinase_N"/>
</dbReference>
<dbReference type="InterPro" id="IPR017437">
    <property type="entry name" value="ATP-NAD_kinase_PpnK-typ_C"/>
</dbReference>
<dbReference type="InterPro" id="IPR016064">
    <property type="entry name" value="NAD/diacylglycerol_kinase_sf"/>
</dbReference>
<dbReference type="InterPro" id="IPR002504">
    <property type="entry name" value="NADK"/>
</dbReference>
<dbReference type="PANTHER" id="PTHR20275">
    <property type="entry name" value="NAD KINASE"/>
    <property type="match status" value="1"/>
</dbReference>
<dbReference type="PANTHER" id="PTHR20275:SF0">
    <property type="entry name" value="NAD KINASE"/>
    <property type="match status" value="1"/>
</dbReference>
<dbReference type="Pfam" id="PF01513">
    <property type="entry name" value="NAD_kinase"/>
    <property type="match status" value="1"/>
</dbReference>
<dbReference type="Pfam" id="PF20143">
    <property type="entry name" value="NAD_kinase_C"/>
    <property type="match status" value="1"/>
</dbReference>
<dbReference type="SUPFAM" id="SSF111331">
    <property type="entry name" value="NAD kinase/diacylglycerol kinase-like"/>
    <property type="match status" value="1"/>
</dbReference>
<sequence>MKKIAIFAKVHDPRALAVAEELIEWLAARGVTAHVEEHLSKRLRRTTLAESSESTEIAADADLVVVLGGDGTLIAAARLVGERDIPILAVNLGSLGFLTEITLDELYPSVERCLAGDFEVTERMMLMASVERSGEVVELHRVLNDVVINKGALARIIDMETSVNCRYLTTFKADGLIVSTPTGSTGYSLSANGPILHPELECISITPICPHTLTNRPVVVAADSHIAIKLNYAPDESVFLTLDGQVGMKLLSGDVVQITKAAHVTRLIRSRSKDYFEVLRTKLKWGER</sequence>
<organism>
    <name type="scientific">Geobacter sp. (strain M21)</name>
    <dbReference type="NCBI Taxonomy" id="443144"/>
    <lineage>
        <taxon>Bacteria</taxon>
        <taxon>Pseudomonadati</taxon>
        <taxon>Thermodesulfobacteriota</taxon>
        <taxon>Desulfuromonadia</taxon>
        <taxon>Geobacterales</taxon>
        <taxon>Geobacteraceae</taxon>
        <taxon>Geobacter</taxon>
    </lineage>
</organism>
<evidence type="ECO:0000255" key="1">
    <source>
        <dbReference type="HAMAP-Rule" id="MF_00361"/>
    </source>
</evidence>
<keyword id="KW-0067">ATP-binding</keyword>
<keyword id="KW-0963">Cytoplasm</keyword>
<keyword id="KW-0418">Kinase</keyword>
<keyword id="KW-0520">NAD</keyword>
<keyword id="KW-0521">NADP</keyword>
<keyword id="KW-0547">Nucleotide-binding</keyword>
<keyword id="KW-0808">Transferase</keyword>
<proteinExistence type="inferred from homology"/>
<comment type="function">
    <text evidence="1">Involved in the regulation of the intracellular balance of NAD and NADP, and is a key enzyme in the biosynthesis of NADP. Catalyzes specifically the phosphorylation on 2'-hydroxyl of the adenosine moiety of NAD to yield NADP.</text>
</comment>
<comment type="catalytic activity">
    <reaction evidence="1">
        <text>NAD(+) + ATP = ADP + NADP(+) + H(+)</text>
        <dbReference type="Rhea" id="RHEA:18629"/>
        <dbReference type="ChEBI" id="CHEBI:15378"/>
        <dbReference type="ChEBI" id="CHEBI:30616"/>
        <dbReference type="ChEBI" id="CHEBI:57540"/>
        <dbReference type="ChEBI" id="CHEBI:58349"/>
        <dbReference type="ChEBI" id="CHEBI:456216"/>
        <dbReference type="EC" id="2.7.1.23"/>
    </reaction>
</comment>
<comment type="cofactor">
    <cofactor evidence="1">
        <name>a divalent metal cation</name>
        <dbReference type="ChEBI" id="CHEBI:60240"/>
    </cofactor>
</comment>
<comment type="subcellular location">
    <subcellularLocation>
        <location evidence="1">Cytoplasm</location>
    </subcellularLocation>
</comment>
<comment type="similarity">
    <text evidence="1">Belongs to the NAD kinase family.</text>
</comment>
<protein>
    <recommendedName>
        <fullName evidence="1">NAD kinase</fullName>
        <ecNumber evidence="1">2.7.1.23</ecNumber>
    </recommendedName>
    <alternativeName>
        <fullName evidence="1">ATP-dependent NAD kinase</fullName>
    </alternativeName>
</protein>
<feature type="chain" id="PRO_1000205419" description="NAD kinase">
    <location>
        <begin position="1"/>
        <end position="288"/>
    </location>
</feature>
<feature type="active site" description="Proton acceptor" evidence="1">
    <location>
        <position position="70"/>
    </location>
</feature>
<feature type="binding site" evidence="1">
    <location>
        <begin position="70"/>
        <end position="71"/>
    </location>
    <ligand>
        <name>NAD(+)</name>
        <dbReference type="ChEBI" id="CHEBI:57540"/>
    </ligand>
</feature>
<feature type="binding site" evidence="1">
    <location>
        <begin position="144"/>
        <end position="145"/>
    </location>
    <ligand>
        <name>NAD(+)</name>
        <dbReference type="ChEBI" id="CHEBI:57540"/>
    </ligand>
</feature>
<feature type="binding site" evidence="1">
    <location>
        <position position="155"/>
    </location>
    <ligand>
        <name>NAD(+)</name>
        <dbReference type="ChEBI" id="CHEBI:57540"/>
    </ligand>
</feature>
<feature type="binding site" evidence="1">
    <location>
        <position position="172"/>
    </location>
    <ligand>
        <name>NAD(+)</name>
        <dbReference type="ChEBI" id="CHEBI:57540"/>
    </ligand>
</feature>
<feature type="binding site" evidence="1">
    <location>
        <position position="174"/>
    </location>
    <ligand>
        <name>NAD(+)</name>
        <dbReference type="ChEBI" id="CHEBI:57540"/>
    </ligand>
</feature>
<feature type="binding site" evidence="1">
    <location>
        <begin position="185"/>
        <end position="190"/>
    </location>
    <ligand>
        <name>NAD(+)</name>
        <dbReference type="ChEBI" id="CHEBI:57540"/>
    </ligand>
</feature>
<feature type="binding site" evidence="1">
    <location>
        <position position="245"/>
    </location>
    <ligand>
        <name>NAD(+)</name>
        <dbReference type="ChEBI" id="CHEBI:57540"/>
    </ligand>
</feature>
<name>NADK_GEOSM</name>
<reference key="1">
    <citation type="submission" date="2009-07" db="EMBL/GenBank/DDBJ databases">
        <title>Complete sequence of Geobacter sp. M21.</title>
        <authorList>
            <consortium name="US DOE Joint Genome Institute"/>
            <person name="Lucas S."/>
            <person name="Copeland A."/>
            <person name="Lapidus A."/>
            <person name="Glavina del Rio T."/>
            <person name="Dalin E."/>
            <person name="Tice H."/>
            <person name="Bruce D."/>
            <person name="Goodwin L."/>
            <person name="Pitluck S."/>
            <person name="Saunders E."/>
            <person name="Brettin T."/>
            <person name="Detter J.C."/>
            <person name="Han C."/>
            <person name="Larimer F."/>
            <person name="Land M."/>
            <person name="Hauser L."/>
            <person name="Kyrpides N."/>
            <person name="Ovchinnikova G."/>
            <person name="Lovley D."/>
        </authorList>
    </citation>
    <scope>NUCLEOTIDE SEQUENCE [LARGE SCALE GENOMIC DNA]</scope>
    <source>
        <strain>M21</strain>
    </source>
</reference>
<gene>
    <name evidence="1" type="primary">nadK</name>
    <name type="ordered locus">GM21_1772</name>
</gene>
<accession>C6E6I5</accession>